<reference key="1">
    <citation type="journal article" date="2001" name="Proc. Natl. Acad. Sci. U.S.A.">
        <title>Biological clock in total darkness: the Clock/MOP3 circadian system of the blind subterranean mole rat.</title>
        <authorList>
            <person name="Avivi A."/>
            <person name="Albrecht U."/>
            <person name="Oster H."/>
            <person name="Joel A."/>
            <person name="Beiles A."/>
            <person name="Nevo E."/>
        </authorList>
    </citation>
    <scope>NUCLEOTIDE SEQUENCE [MRNA]</scope>
    <scope>INTERACTION WITH CLOCK</scope>
    <scope>FUNCTION</scope>
    <scope>TISSUE SPECIFICITY</scope>
    <source>
        <tissue>Brain</tissue>
    </source>
</reference>
<evidence type="ECO:0000250" key="1">
    <source>
        <dbReference type="UniProtKB" id="O00327"/>
    </source>
</evidence>
<evidence type="ECO:0000250" key="2">
    <source>
        <dbReference type="UniProtKB" id="Q9WTL8"/>
    </source>
</evidence>
<evidence type="ECO:0000255" key="3">
    <source>
        <dbReference type="PROSITE-ProRule" id="PRU00140"/>
    </source>
</evidence>
<evidence type="ECO:0000255" key="4">
    <source>
        <dbReference type="PROSITE-ProRule" id="PRU00981"/>
    </source>
</evidence>
<evidence type="ECO:0000256" key="5">
    <source>
        <dbReference type="SAM" id="MobiDB-lite"/>
    </source>
</evidence>
<evidence type="ECO:0000269" key="6">
    <source>
    </source>
</evidence>
<evidence type="ECO:0000303" key="7">
    <source>
    </source>
</evidence>
<sequence>MADQRMDISSTISDFMSPGPTDLLSSSLGTSGVDCNRKRKGSSTDYQESMDTDKDDPHGRLEYTEHQGRIKNAREAHSQIEKRRRDKMNSFIDELASLVPTCNAMSRKLDKLTVLRMAVQHMKTLRGATNPYTEANYKPTFLSDDELKHLILRAADGFLFVVGCDRGKILFVSESVFKILNYSQNDLIGQSLFDYLHPKDIAKVKEQLSSSDTAPRERLIDAKTGLPVKTDITPGPSRLCSGARRSFFCRMKCNRPSVKVEDKDFPSTCSKKKADRKSFCTIHSTGYLKSWPPTKMGLDEDNEADSEGCNLSCLVAIGRLHSHVVPQPAGGDIKVKSTEYVSRHAIDGKFVFVDQRATAILAYLPQELLGTSCYEYFHQDDIGHLAECHRQVLQTREKITTNCYKFKIKDGSFITLRSRWFSFMNPWTKEVEYIVSTNTVVLANVLEGGDPTFPQLTASPHSMDSMLPSGEGGPKKTHPTVPGIPGGTRAGAGKIGRMIAEEIMEIHRIRGSSPSSCGSSPLNITSTPPPDASSPGGKKILNGGTPDIPSSGLLPGQAQENPGYPYSDSSSILGENPHISIDMIDNDQGSSSPSNDEAAMAVIMSLLEADAGLGGPVDFSDLPWPL</sequence>
<dbReference type="EMBL" id="AJ318060">
    <property type="protein sequence ID" value="CAC85406.1"/>
    <property type="molecule type" value="mRNA"/>
</dbReference>
<dbReference type="RefSeq" id="NP_001288604.1">
    <property type="nucleotide sequence ID" value="NM_001301675.1"/>
</dbReference>
<dbReference type="SMR" id="Q91YA9"/>
<dbReference type="GeneID" id="103750418"/>
<dbReference type="KEGG" id="ngi:103750418"/>
<dbReference type="CTD" id="406"/>
<dbReference type="OrthoDB" id="71302at2759"/>
<dbReference type="Proteomes" id="UP000694381">
    <property type="component" value="Unplaced"/>
</dbReference>
<dbReference type="GO" id="GO:0033391">
    <property type="term" value="C:chromatoid body"/>
    <property type="evidence" value="ECO:0000250"/>
    <property type="project" value="UniProtKB"/>
</dbReference>
<dbReference type="GO" id="GO:0005634">
    <property type="term" value="C:nucleus"/>
    <property type="evidence" value="ECO:0000250"/>
    <property type="project" value="UniProtKB"/>
</dbReference>
<dbReference type="GO" id="GO:0016605">
    <property type="term" value="C:PML body"/>
    <property type="evidence" value="ECO:0007669"/>
    <property type="project" value="UniProtKB-SubCell"/>
</dbReference>
<dbReference type="GO" id="GO:0005667">
    <property type="term" value="C:transcription regulator complex"/>
    <property type="evidence" value="ECO:0000250"/>
    <property type="project" value="UniProtKB"/>
</dbReference>
<dbReference type="GO" id="GO:0003677">
    <property type="term" value="F:DNA binding"/>
    <property type="evidence" value="ECO:0000250"/>
    <property type="project" value="UniProtKB"/>
</dbReference>
<dbReference type="GO" id="GO:0003700">
    <property type="term" value="F:DNA-binding transcription factor activity"/>
    <property type="evidence" value="ECO:0007669"/>
    <property type="project" value="InterPro"/>
</dbReference>
<dbReference type="GO" id="GO:0070888">
    <property type="term" value="F:E-box binding"/>
    <property type="evidence" value="ECO:0000250"/>
    <property type="project" value="UniProtKB"/>
</dbReference>
<dbReference type="GO" id="GO:0046983">
    <property type="term" value="F:protein dimerization activity"/>
    <property type="evidence" value="ECO:0007669"/>
    <property type="project" value="InterPro"/>
</dbReference>
<dbReference type="GO" id="GO:0000978">
    <property type="term" value="F:RNA polymerase II cis-regulatory region sequence-specific DNA binding"/>
    <property type="evidence" value="ECO:0000250"/>
    <property type="project" value="UniProtKB"/>
</dbReference>
<dbReference type="GO" id="GO:0032922">
    <property type="term" value="P:circadian regulation of gene expression"/>
    <property type="evidence" value="ECO:0000250"/>
    <property type="project" value="UniProtKB"/>
</dbReference>
<dbReference type="GO" id="GO:0045599">
    <property type="term" value="P:negative regulation of fat cell differentiation"/>
    <property type="evidence" value="ECO:0000250"/>
    <property type="project" value="UniProtKB"/>
</dbReference>
<dbReference type="GO" id="GO:0032007">
    <property type="term" value="P:negative regulation of TOR signaling"/>
    <property type="evidence" value="ECO:0000250"/>
    <property type="project" value="UniProtKB"/>
</dbReference>
<dbReference type="GO" id="GO:0090403">
    <property type="term" value="P:oxidative stress-induced premature senescence"/>
    <property type="evidence" value="ECO:0000250"/>
    <property type="project" value="UniProtKB"/>
</dbReference>
<dbReference type="GO" id="GO:0090263">
    <property type="term" value="P:positive regulation of canonical Wnt signaling pathway"/>
    <property type="evidence" value="ECO:0000250"/>
    <property type="project" value="UniProtKB"/>
</dbReference>
<dbReference type="GO" id="GO:0042753">
    <property type="term" value="P:positive regulation of circadian rhythm"/>
    <property type="evidence" value="ECO:0000250"/>
    <property type="project" value="UniProtKB"/>
</dbReference>
<dbReference type="GO" id="GO:0045893">
    <property type="term" value="P:positive regulation of DNA-templated transcription"/>
    <property type="evidence" value="ECO:0000250"/>
    <property type="project" value="UniProtKB"/>
</dbReference>
<dbReference type="GO" id="GO:1901985">
    <property type="term" value="P:positive regulation of protein acetylation"/>
    <property type="evidence" value="ECO:0000250"/>
    <property type="project" value="UniProtKB"/>
</dbReference>
<dbReference type="GO" id="GO:2001016">
    <property type="term" value="P:positive regulation of skeletal muscle cell differentiation"/>
    <property type="evidence" value="ECO:0000250"/>
    <property type="project" value="UniProtKB"/>
</dbReference>
<dbReference type="GO" id="GO:0043161">
    <property type="term" value="P:proteasome-mediated ubiquitin-dependent protein catabolic process"/>
    <property type="evidence" value="ECO:0000250"/>
    <property type="project" value="UniProtKB"/>
</dbReference>
<dbReference type="GO" id="GO:0051726">
    <property type="term" value="P:regulation of cell cycle"/>
    <property type="evidence" value="ECO:0000250"/>
    <property type="project" value="UniProtKB"/>
</dbReference>
<dbReference type="GO" id="GO:2000772">
    <property type="term" value="P:regulation of cellular senescence"/>
    <property type="evidence" value="ECO:0000250"/>
    <property type="project" value="UniProtKB"/>
</dbReference>
<dbReference type="GO" id="GO:0006355">
    <property type="term" value="P:regulation of DNA-templated transcription"/>
    <property type="evidence" value="ECO:0000250"/>
    <property type="project" value="UniProtKB"/>
</dbReference>
<dbReference type="GO" id="GO:0042634">
    <property type="term" value="P:regulation of hair cycle"/>
    <property type="evidence" value="ECO:0000250"/>
    <property type="project" value="UniProtKB"/>
</dbReference>
<dbReference type="GO" id="GO:0050796">
    <property type="term" value="P:regulation of insulin secretion"/>
    <property type="evidence" value="ECO:0000250"/>
    <property type="project" value="UniProtKB"/>
</dbReference>
<dbReference type="GO" id="GO:0050767">
    <property type="term" value="P:regulation of neurogenesis"/>
    <property type="evidence" value="ECO:0000250"/>
    <property type="project" value="UniProtKB"/>
</dbReference>
<dbReference type="GO" id="GO:2000074">
    <property type="term" value="P:regulation of type B pancreatic cell development"/>
    <property type="evidence" value="ECO:0000250"/>
    <property type="project" value="UniProtKB"/>
</dbReference>
<dbReference type="GO" id="GO:0051775">
    <property type="term" value="P:response to redox state"/>
    <property type="evidence" value="ECO:0000250"/>
    <property type="project" value="UniProtKB"/>
</dbReference>
<dbReference type="GO" id="GO:0007283">
    <property type="term" value="P:spermatogenesis"/>
    <property type="evidence" value="ECO:0000250"/>
    <property type="project" value="UniProtKB"/>
</dbReference>
<dbReference type="CDD" id="cd11438">
    <property type="entry name" value="bHLH-PAS_ARNTL_PASD3"/>
    <property type="match status" value="1"/>
</dbReference>
<dbReference type="CDD" id="cd00130">
    <property type="entry name" value="PAS"/>
    <property type="match status" value="2"/>
</dbReference>
<dbReference type="FunFam" id="4.10.280.10:FF:000018">
    <property type="entry name" value="Aryl hydrocarbon receptor nuclear translocator-like protein 1"/>
    <property type="match status" value="1"/>
</dbReference>
<dbReference type="FunFam" id="3.30.450.20:FF:000006">
    <property type="entry name" value="aryl hydrocarbon receptor nuclear translocator-like protein 1"/>
    <property type="match status" value="1"/>
</dbReference>
<dbReference type="FunFam" id="3.30.450.20:FF:000010">
    <property type="entry name" value="Aryl hydrocarbon receptor nuclear translocator-like, isoform CRA_b"/>
    <property type="match status" value="1"/>
</dbReference>
<dbReference type="Gene3D" id="4.10.280.10">
    <property type="entry name" value="Helix-loop-helix DNA-binding domain"/>
    <property type="match status" value="1"/>
</dbReference>
<dbReference type="Gene3D" id="3.30.450.20">
    <property type="entry name" value="PAS domain"/>
    <property type="match status" value="2"/>
</dbReference>
<dbReference type="InterPro" id="IPR011598">
    <property type="entry name" value="bHLH_dom"/>
</dbReference>
<dbReference type="InterPro" id="IPR050933">
    <property type="entry name" value="Circadian_TF"/>
</dbReference>
<dbReference type="InterPro" id="IPR036638">
    <property type="entry name" value="HLH_DNA-bd_sf"/>
</dbReference>
<dbReference type="InterPro" id="IPR001067">
    <property type="entry name" value="Nuc_translocat"/>
</dbReference>
<dbReference type="InterPro" id="IPR001610">
    <property type="entry name" value="PAC"/>
</dbReference>
<dbReference type="InterPro" id="IPR000014">
    <property type="entry name" value="PAS"/>
</dbReference>
<dbReference type="InterPro" id="IPR035965">
    <property type="entry name" value="PAS-like_dom_sf"/>
</dbReference>
<dbReference type="InterPro" id="IPR013767">
    <property type="entry name" value="PAS_fold"/>
</dbReference>
<dbReference type="NCBIfam" id="TIGR00229">
    <property type="entry name" value="sensory_box"/>
    <property type="match status" value="1"/>
</dbReference>
<dbReference type="PANTHER" id="PTHR23042">
    <property type="entry name" value="CIRCADIAN PROTEIN CLOCK/ARNT/BMAL/PAS"/>
    <property type="match status" value="1"/>
</dbReference>
<dbReference type="Pfam" id="PF00010">
    <property type="entry name" value="HLH"/>
    <property type="match status" value="1"/>
</dbReference>
<dbReference type="Pfam" id="PF00989">
    <property type="entry name" value="PAS"/>
    <property type="match status" value="1"/>
</dbReference>
<dbReference type="Pfam" id="PF14598">
    <property type="entry name" value="PAS_11"/>
    <property type="match status" value="1"/>
</dbReference>
<dbReference type="PRINTS" id="PR00785">
    <property type="entry name" value="NCTRNSLOCATR"/>
</dbReference>
<dbReference type="SMART" id="SM00353">
    <property type="entry name" value="HLH"/>
    <property type="match status" value="1"/>
</dbReference>
<dbReference type="SMART" id="SM00086">
    <property type="entry name" value="PAC"/>
    <property type="match status" value="1"/>
</dbReference>
<dbReference type="SMART" id="SM00091">
    <property type="entry name" value="PAS"/>
    <property type="match status" value="2"/>
</dbReference>
<dbReference type="SUPFAM" id="SSF47459">
    <property type="entry name" value="HLH, helix-loop-helix DNA-binding domain"/>
    <property type="match status" value="1"/>
</dbReference>
<dbReference type="SUPFAM" id="SSF55785">
    <property type="entry name" value="PYP-like sensor domain (PAS domain)"/>
    <property type="match status" value="2"/>
</dbReference>
<dbReference type="PROSITE" id="PS50888">
    <property type="entry name" value="BHLH"/>
    <property type="match status" value="1"/>
</dbReference>
<dbReference type="PROSITE" id="PS50112">
    <property type="entry name" value="PAS"/>
    <property type="match status" value="2"/>
</dbReference>
<feature type="chain" id="PRO_0000262644" description="Basic helix-loop-helix ARNT-like protein 1">
    <location>
        <begin position="1"/>
        <end position="626"/>
    </location>
</feature>
<feature type="domain" description="bHLH" evidence="4">
    <location>
        <begin position="72"/>
        <end position="125"/>
    </location>
</feature>
<feature type="domain" description="PAS 1" evidence="3">
    <location>
        <begin position="143"/>
        <end position="215"/>
    </location>
</feature>
<feature type="domain" description="PAS 2" evidence="3">
    <location>
        <begin position="326"/>
        <end position="396"/>
    </location>
</feature>
<feature type="domain" description="PAC">
    <location>
        <begin position="402"/>
        <end position="445"/>
    </location>
</feature>
<feature type="region of interest" description="Disordered" evidence="5">
    <location>
        <begin position="1"/>
        <end position="60"/>
    </location>
</feature>
<feature type="region of interest" description="Disordered" evidence="5">
    <location>
        <begin position="458"/>
        <end position="493"/>
    </location>
</feature>
<feature type="region of interest" description="Interaction with CIART" evidence="2">
    <location>
        <begin position="508"/>
        <end position="588"/>
    </location>
</feature>
<feature type="region of interest" description="Disordered" evidence="5">
    <location>
        <begin position="511"/>
        <end position="596"/>
    </location>
</feature>
<feature type="short sequence motif" description="Nuclear localization signal" evidence="2">
    <location>
        <begin position="36"/>
        <end position="41"/>
    </location>
</feature>
<feature type="short sequence motif" description="Nuclear export signal 1" evidence="2">
    <location>
        <begin position="142"/>
        <end position="152"/>
    </location>
</feature>
<feature type="short sequence motif" description="Nuclear export signal 2" evidence="2">
    <location>
        <begin position="361"/>
        <end position="369"/>
    </location>
</feature>
<feature type="compositionally biased region" description="Low complexity" evidence="5">
    <location>
        <begin position="17"/>
        <end position="32"/>
    </location>
</feature>
<feature type="compositionally biased region" description="Basic and acidic residues" evidence="5">
    <location>
        <begin position="51"/>
        <end position="60"/>
    </location>
</feature>
<feature type="compositionally biased region" description="Gly residues" evidence="5">
    <location>
        <begin position="484"/>
        <end position="493"/>
    </location>
</feature>
<feature type="compositionally biased region" description="Low complexity" evidence="5">
    <location>
        <begin position="511"/>
        <end position="521"/>
    </location>
</feature>
<feature type="site" description="Interaction with E-box DNA" evidence="1">
    <location>
        <position position="77"/>
    </location>
</feature>
<feature type="site" description="Interaction with E-box DNA" evidence="1">
    <location>
        <position position="80"/>
    </location>
</feature>
<feature type="site" description="Interaction with E-box DNA" evidence="1">
    <location>
        <position position="81"/>
    </location>
</feature>
<feature type="site" description="Interaction with E-box DNA" evidence="1">
    <location>
        <position position="85"/>
    </location>
</feature>
<feature type="site" description="Important for interaction with CLOCK" evidence="1">
    <location>
        <position position="125"/>
    </location>
</feature>
<feature type="modified residue" description="Phosphoserine; by GSK3-beta" evidence="2">
    <location>
        <position position="17"/>
    </location>
</feature>
<feature type="modified residue" description="Phosphothreonine; by GSK3-beta" evidence="2">
    <location>
        <position position="21"/>
    </location>
</feature>
<feature type="modified residue" description="Phosphoserine" evidence="1">
    <location>
        <position position="78"/>
    </location>
</feature>
<feature type="modified residue" description="Phosphoserine; by CK2" evidence="2">
    <location>
        <position position="90"/>
    </location>
</feature>
<feature type="modified residue" description="N6-acetyllysine" evidence="2">
    <location>
        <position position="538"/>
    </location>
</feature>
<feature type="cross-link" description="Glycyl lysine isopeptide (Lys-Gly) (interchain with G-Cter in SUMO2 and SUMO3)" evidence="2">
    <location>
        <position position="252"/>
    </location>
</feature>
<feature type="cross-link" description="Glycyl lysine isopeptide (Lys-Gly) (interchain with G-Cter in SUMO); alternate" evidence="2">
    <location>
        <position position="259"/>
    </location>
</feature>
<feature type="cross-link" description="Glycyl lysine isopeptide (Lys-Gly) (interchain with G-Cter in SUMO2); alternate" evidence="1">
    <location>
        <position position="259"/>
    </location>
</feature>
<gene>
    <name type="primary">Bmal1</name>
    <name type="synonym">Arntl</name>
    <name evidence="7" type="synonym">Mop3</name>
</gene>
<proteinExistence type="evidence at protein level"/>
<protein>
    <recommendedName>
        <fullName>Basic helix-loop-helix ARNT-like protein 1</fullName>
    </recommendedName>
    <alternativeName>
        <fullName>Aryl hydrocarbon receptor nuclear translocator-like protein 1</fullName>
    </alternativeName>
    <alternativeName>
        <fullName evidence="7">Basic-helix-loop-helix-PAS protein MOP3</fullName>
    </alternativeName>
    <alternativeName>
        <fullName>Brain and muscle ARNT-like 1</fullName>
    </alternativeName>
</protein>
<name>BMAL1_NANGA</name>
<comment type="function">
    <text evidence="1 2 6">Transcriptional activator which forms a core component of the circadian clock. The circadian clock, an internal time-keeping system, regulates various physiological processes through the generation of approximately 24 hour circadian rhythms in gene expression, which are translated into rhythms in metabolism and behavior. It is derived from the Latin roots 'circa' (about) and 'diem' (day) and acts as an important regulator of a wide array of physiological functions including metabolism, sleep, body temperature, blood pressure, endocrine, immune, cardiovascular, and renal function. Consists of two major components: the central clock, residing in the suprachiasmatic nucleus (SCN) of the brain, and the peripheral clocks that are present in nearly every tissue and organ system. Both the central and peripheral clocks can be reset by environmental cues, also known as Zeitgebers (German for 'timegivers'). The predominant Zeitgeber for the central clock is light, which is sensed by retina and signals directly to the SCN. The central clock entrains the peripheral clocks through neuronal and hormonal signals, body temperature and feeding-related cues, aligning all clocks with the external light/dark cycle. Circadian rhythms allow an organism to achieve temporal homeostasis with its environment at the molecular level by regulating gene expression to create a peak of protein expression once every 24 hours to control when a particular physiological process is most active with respect to the solar day. Transcription and translation of core clock components (CLOCK, NPAS2, BMAL1, BMAL2, PER1, PER2, PER3, CRY1 and CRY2) plays a critical role in rhythm generation, whereas delays imposed by post-translational modifications (PTMs) are important for determining the period (tau) of the rhythms (tau refers to the period of a rhythm and is the length, in time, of one complete cycle). A diurnal rhythm is synchronized with the day/night cycle, while the ultradian and infradian rhythms have a period shorter and longer than 24 hours, respectively. Disruptions in the circadian rhythms contribute to the pathology of cardiovascular diseases, cancer, metabolic syndromes and aging. A transcription/translation feedback loop (TTFL) forms the core of the molecular circadian clock mechanism. Transcription factors, CLOCK or NPAS2 and BMAL1 or BMAL2, form the positive limb of the feedback loop, act in the form of a heterodimer and activate the transcription of core clock genes and clock-controlled genes (involved in key metabolic processes), harboring E-box elements (5'-CACGTG-3') within their promoters. The core clock genes: PER1/2/3 and CRY1/2 which are transcriptional repressors form the negative limb of the feedback loop and interact with the CLOCK|NPAS2-BMAL1|BMAL2 heterodimer inhibiting its activity and thereby negatively regulating their own expression. This heterodimer also activates nuclear receptors NR1D1/2 and RORA/B/G, which form a second feedback loop and which activate and repress BMAL1 transcription, respectively. BMAL1 positively regulates myogenesis and negatively regulates adipogenesis via the transcriptional control of the genes of the canonical Wnt signaling pathway. Plays a role in normal pancreatic beta-cell function; regulates glucose-stimulated insulin secretion via the regulation of antioxidant genes NFE2L2/NRF2 and its targets SESN2, PRDX3, CCLC and CCLM. Negatively regulates the mTORC1 signaling pathway; regulates the expression of MTOR and DEPTOR. Controls diurnal oscillations of Ly6C inflammatory monocytes; rhythmic recruitment of the PRC2 complex imparts diurnal variation to chemokine expression that is necessary to sustain Ly6C monocyte rhythms. Regulates the expression of HSD3B2, STAR, PTGS2, CYP11A1, CYP19A1 and LHCGR in the ovary and also the genes involved in hair growth. Plays an important role in adult hippocampal neurogenesis by regulating the timely entry of neural stem/progenitor cells (NSPCs) into the cell cycle and the number of cell divisions that take place prior to cell-cycle exit. Regulates the circadian expression of CIART and KLF11. The CLOCK-BMAL1 heterodimer regulates the circadian expression of SERPINE1/PAI1, VWF, B3, CCRN4L/NOC, NAMPT, DBP, MYOD1, PPARGC1A, PPARGC1B, SIRT1, GYS2, F7, NGFR, GNRHR, BHLHE40/DEC1, ATF4, MTA1, KLF10 and also genes implicated in glucose and lipid metabolism. Promotes rhythmic chromatin opening, regulating the DNA accessibility of other transcription factors. The NPAS2-BMAL1 heterodimer positively regulates the expression of MAOA, F7 and LDHA and modulates the circadian rhythm of daytime contrast sensitivity by regulating the rhythmic expression of adenylate cyclase type 1 (ADCY1) in the retina (By similarity). The preferred binding motif for the CLOCK-BMAL1 heterodimer is 5'-CACGTGA-3', which contains a flanking adenine nucleotide at the 3-prime end of the canonical 6-nucleotide E-box sequence. CLOCK specifically binds to the half-site 5'-CAC-3', while BMAL1 binds to the half-site 5'-GTGA-3'. The CLOCK-BMAL1 heterodimer also recognizes the non-canonical E-box motifs 5'-AACGTGA-3' and 5'-CATGTGA-3'. Essential for the rhythmic interaction of CLOCK with ASS1 and plays a critical role in positively regulating CLOCK-mediated acetylation of ASS1. Plays a role in protecting against lethal sepsis by limiting the expression of immune checkpoint protein CD274 in macrophages in a PKM2-dependent manner (By similarity). Regulates the diurnal rhythms of skeletal muscle metabolism via transcriptional activation of genes promoting triglyceride synthesis (DGAT2) and metabolic efficiency (COQ10B) (By similarity).</text>
</comment>
<comment type="subunit">
    <text evidence="1 2 6">Component of the circadian clock oscillator which includes the CRY1/2 proteins, CLOCK or NPAS2, BMAL1 or BMAL2, CSNK1D and/or CSNK1E, TIMELESS and the PER1/2/3 proteins (By similarity). Forms a heterodimer with CLOCK (PubMed:11707566). The CLOCK-BMAL1 heterodimer is required for E-box-dependent transactivation, for CLOCK nuclear translocation and degradation, and, for phosphorylation of both CLOCK and BMAL1 (By similarity). Part of a nuclear complex which also includes RACK1 and PRKCA; RACK1 and PRKCA are recruited to the complex in a circadian manner (By similarity). Interacts with NPAS2 (By similarity). Interacts with EZH2 (By similarity). Interacts with SUMO3 (By similarity). Interacts with SIRT1 (By similarity). Interacts with AHR (By similarity). Interacts with ID1, ID2 and ID3 (By similarity). Interacts with DDX4 (By similarity). Interacts with OGT (By similarity). Interacts with EED and SUZ12 (By similarity). Interacts with MTA1 (By similarity). Interacts with CIART (By similarity). Interacts with HSP90 (By similarity). Interacts with KAT2B and EP300 (By similarity). Interacts with BHLHE40/DEC1 and BHLHE41/DEC2 (By similarity). Interacts with RELB and the interaction is enhanced in the presence of CLOCK (By similarity). Interacts with PER1, PER2, CRY1 and CRY2 and this interaction requires a translocation to the nucleus (By similarity). Interaction of the CLOCK-BMAL1 heterodimer with PER or CRY inhibits transcription activation (By similarity). Interaction of the CLOCK-BMAL1 with CRY1 is independent of DNA but with PER2 is off DNA (By similarity). The CLOCK-BMAL1 heterodimer interacts with GSK3B (By similarity). Interacts with KDM5A (By similarity). Interacts with KMT2A; in a circadian manner (By similarity). Interacts with UBE3A (By similarity). Interacts with PRKCG (By similarity). Interacts with MAGEL2 (By similarity). Interacts with NCOA2 (By similarity). Interacts with THRAP3 (By similarity). The CLOCK-BMAL1 heterodimer interacts with PASD1 (By similarity). Interacts with PASD1 (By similarity). Interacts with USP9X (By similarity). Interacts with PIWIL2 (via PIWI domain) (By similarity). Interacts with HDAC3 (By similarity). Interacts with HNF4A (By similarity).</text>
</comment>
<comment type="subcellular location">
    <subcellularLocation>
        <location evidence="4">Nucleus</location>
    </subcellularLocation>
    <subcellularLocation>
        <location evidence="2">Cytoplasm</location>
    </subcellularLocation>
    <subcellularLocation>
        <location evidence="2">Nucleus</location>
        <location evidence="2">PML body</location>
    </subcellularLocation>
    <text evidence="2">Shuttles between the nucleus and the cytoplasm and this nucleocytoplasmic shuttling is essential for the nuclear accumulation of CLOCK, target gene transcription and the degradation of the CLOCK-BMAL1 heterodimer. The sumoylated form localizes in the PML body. Sequestered to the cytoplasm in the presence of ID2.</text>
</comment>
<comment type="tissue specificity">
    <text evidence="6">Highly expressed in the suprachiasmatic nucleus (SCN). Also expressed in all other tissues examined including kidney, intestine, liver, heart, spleen, brain, muscle, lung, harderian gland and eye. Low expression in kidney and spleen.</text>
</comment>
<comment type="PTM">
    <text evidence="2">Ubiquitinated, leading to its proteasomal degradation. Deubiquitinated by USP9X.</text>
</comment>
<comment type="PTM">
    <text evidence="2">O-glycosylated; contains O-GlcNAc. O-glycosylation by OGT prevents protein degradation by inhibiting ubiquitination. It also stabilizes the CLOCK-BMAL1 heterodimer thereby increasing CLOCK-BMAL1-mediated transcription of genes in the negative loop of the circadian clock such as PER1/2/3 and CRY1/2.</text>
</comment>
<comment type="PTM">
    <text evidence="2">Acetylated on Lys-538 by CLOCK during the repression phase of the circadian cycle. Acetylation facilitates recruitment of CRY1 protein and initiates the repression phase of the circadian cycle. Acetylated at Lys-538 by KAT5 during the activation phase of the cycle, leading to recruitment of the positive transcription elongation factor b (P-TEFb) and BRD4, followed by productive elongation of circadian transcripts. Deacetylated by SIRT1, which may result in decreased protein stability.</text>
</comment>
<comment type="PTM">
    <text evidence="1 2">Phosphorylated upon dimerization with CLOCK. Phosphorylation enhances the transcriptional activity, alters the subcellular localization and decreases the stability of the CLOCK-BMAL1 heterodimer by promoting its degradation. Phosphorylation shows circadian variations in the liver with a peak between CT10 to CT14. Phosphorylation at Ser-90 by CK2 is essential for its nuclear localization, its interaction with CLOCK and controls CLOCK nuclear entry. Dephosphorylation at Ser-78 is important for dimerization with CLOCK and transcriptional activity.</text>
</comment>
<comment type="PTM">
    <text evidence="2">Sumoylated on Lys-259 upon dimerization with CLOCK. Predominantly conjugated to poly-SUMO2/3 rather than SUMO1 and the level of these conjugates undergo rhythmic variation, peaking at CT9-CT12. Sumoylation localizes it exclusively to the PML body and promotes its ubiquitination in the PML body, ubiquitin-dependent proteasomal degradation and the transcriptional activity of the CLOCK-BMAL1 heterodimer.</text>
</comment>
<comment type="PTM">
    <text evidence="2">Undergoes lysosome-mediated degradation in a time-dependent manner in the liver.</text>
</comment>
<accession>Q91YA9</accession>
<organism>
    <name type="scientific">Nannospalax galili</name>
    <name type="common">Northern Israeli blind subterranean mole rat</name>
    <name type="synonym">Spalax galili</name>
    <dbReference type="NCBI Taxonomy" id="1026970"/>
    <lineage>
        <taxon>Eukaryota</taxon>
        <taxon>Metazoa</taxon>
        <taxon>Chordata</taxon>
        <taxon>Craniata</taxon>
        <taxon>Vertebrata</taxon>
        <taxon>Euteleostomi</taxon>
        <taxon>Mammalia</taxon>
        <taxon>Eutheria</taxon>
        <taxon>Euarchontoglires</taxon>
        <taxon>Glires</taxon>
        <taxon>Rodentia</taxon>
        <taxon>Myomorpha</taxon>
        <taxon>Muroidea</taxon>
        <taxon>Spalacidae</taxon>
        <taxon>Spalacinae</taxon>
        <taxon>Nannospalax</taxon>
    </lineage>
</organism>
<keyword id="KW-0007">Acetylation</keyword>
<keyword id="KW-0010">Activator</keyword>
<keyword id="KW-0090">Biological rhythms</keyword>
<keyword id="KW-0963">Cytoplasm</keyword>
<keyword id="KW-0238">DNA-binding</keyword>
<keyword id="KW-1017">Isopeptide bond</keyword>
<keyword id="KW-0539">Nucleus</keyword>
<keyword id="KW-0597">Phosphoprotein</keyword>
<keyword id="KW-1185">Reference proteome</keyword>
<keyword id="KW-0677">Repeat</keyword>
<keyword id="KW-0804">Transcription</keyword>
<keyword id="KW-0805">Transcription regulation</keyword>
<keyword id="KW-0832">Ubl conjugation</keyword>